<sequence>MKTGIVTTLIALCLPVSVFATTLRLSTDVDLLVLDGKKVSSSLLRGADSIELDNGPHQLVFRVEKTIHLSNSEERLYISPPLVVSFNTQLINQVNFRLPRLENEREANHFDAAPRLELLDGDATPIPVKLDILAITSTAKTIDYEVEVERYNKSAKRASLPQFATMMADDSTLLSGVSELDAIPPQSQVLTEQRLKYWFKLADPQTRNTFLQWAEKQPSS</sequence>
<accession>B1X8R8</accession>
<reference key="1">
    <citation type="journal article" date="2008" name="J. Bacteriol.">
        <title>The complete genome sequence of Escherichia coli DH10B: insights into the biology of a laboratory workhorse.</title>
        <authorList>
            <person name="Durfee T."/>
            <person name="Nelson R."/>
            <person name="Baldwin S."/>
            <person name="Plunkett G. III"/>
            <person name="Burland V."/>
            <person name="Mau B."/>
            <person name="Petrosino J.F."/>
            <person name="Qin X."/>
            <person name="Muzny D.M."/>
            <person name="Ayele M."/>
            <person name="Gibbs R.A."/>
            <person name="Csorgo B."/>
            <person name="Posfai G."/>
            <person name="Weinstock G.M."/>
            <person name="Blattner F.R."/>
        </authorList>
    </citation>
    <scope>NUCLEOTIDE SEQUENCE [LARGE SCALE GENOMIC DNA]</scope>
    <source>
        <strain>K12 / DH10B</strain>
    </source>
</reference>
<organism>
    <name type="scientific">Escherichia coli (strain K12 / DH10B)</name>
    <dbReference type="NCBI Taxonomy" id="316385"/>
    <lineage>
        <taxon>Bacteria</taxon>
        <taxon>Pseudomonadati</taxon>
        <taxon>Pseudomonadota</taxon>
        <taxon>Gammaproteobacteria</taxon>
        <taxon>Enterobacterales</taxon>
        <taxon>Enterobacteriaceae</taxon>
        <taxon>Escherichia</taxon>
    </lineage>
</organism>
<comment type="similarity">
    <text evidence="1">Belongs to the UPF0319 family.</text>
</comment>
<name>YCCT_ECODH</name>
<proteinExistence type="inferred from homology"/>
<keyword id="KW-0732">Signal</keyword>
<gene>
    <name evidence="1" type="primary">yccT</name>
    <name type="ordered locus">ECDH10B_1034</name>
</gene>
<evidence type="ECO:0000255" key="1">
    <source>
        <dbReference type="HAMAP-Rule" id="MF_00789"/>
    </source>
</evidence>
<feature type="signal peptide" evidence="1">
    <location>
        <begin position="1"/>
        <end position="20"/>
    </location>
</feature>
<feature type="chain" id="PRO_1000200483" description="UPF0319 protein YccT">
    <location>
        <begin position="21"/>
        <end position="220"/>
    </location>
</feature>
<protein>
    <recommendedName>
        <fullName evidence="1">UPF0319 protein YccT</fullName>
    </recommendedName>
</protein>
<dbReference type="EMBL" id="CP000948">
    <property type="protein sequence ID" value="ACB02164.1"/>
    <property type="molecule type" value="Genomic_DNA"/>
</dbReference>
<dbReference type="RefSeq" id="WP_000847791.1">
    <property type="nucleotide sequence ID" value="NC_010473.1"/>
</dbReference>
<dbReference type="KEGG" id="ecd:ECDH10B_1034"/>
<dbReference type="HOGENOM" id="CLU_073782_2_0_6"/>
<dbReference type="HAMAP" id="MF_00789">
    <property type="entry name" value="UPF0319"/>
    <property type="match status" value="1"/>
</dbReference>
<dbReference type="InterPro" id="IPR018635">
    <property type="entry name" value="UPF0319"/>
</dbReference>
<dbReference type="NCBIfam" id="NF047712">
    <property type="entry name" value="CrliSynInhib"/>
    <property type="match status" value="1"/>
</dbReference>
<dbReference type="NCBIfam" id="NF002967">
    <property type="entry name" value="PRK03641.1"/>
    <property type="match status" value="1"/>
</dbReference>
<dbReference type="PANTHER" id="PTHR38108">
    <property type="entry name" value="UPF0319 PROTEIN YCCT"/>
    <property type="match status" value="1"/>
</dbReference>
<dbReference type="PANTHER" id="PTHR38108:SF1">
    <property type="entry name" value="UPF0319 PROTEIN YCCT"/>
    <property type="match status" value="1"/>
</dbReference>
<dbReference type="Pfam" id="PF09829">
    <property type="entry name" value="DUF2057"/>
    <property type="match status" value="1"/>
</dbReference>